<name>FAD6C_BRANA</name>
<evidence type="ECO:0000250" key="1">
    <source>
        <dbReference type="UniProtKB" id="P46312"/>
    </source>
</evidence>
<evidence type="ECO:0000269" key="2">
    <source>
    </source>
</evidence>
<evidence type="ECO:0000303" key="3">
    <source>
    </source>
</evidence>
<evidence type="ECO:0000305" key="4"/>
<sequence>MASRIADSLFAFTGPQQCLPRAPKLASARLSPGVYAVRPIDLLLKGTRRTFLVPAKKRIGCIKAVFVPVAPPSADNAEDREQLAESYGFKQIGQDLPDNVTLKDIMDTLPKEVFEIDDVKAWKSVLISVTSYALGLFMIAKAPWYLLPLAWAWTGTAVTGFFVIGHDCAHKSFSKNKLVEDIVGTLAFLPLVYPYEPWRFKHDRHHAKTNMLVHDTAWQPVPPEEFDSSPVLRKAIIFGYGPIRPWLSIAHWVNWHFNLRKFRPSEVNRVKISLACVFAFMAVGWPLIIYKVGVLGWVKFWLMPWLGYHFWMSTFTMVHHTAPHIPFKPADEWNAAQAQLNGTVHCDYPSWIEILCHDINVHIPHHISPRIPSYNLRAAHQSIQENWGKYTNLATWNWRLMKTIMTVCHVYDKEENYIPFDRLAPEESQPITFLKKAMPDYAA</sequence>
<feature type="transit peptide" description="Chloroplast" evidence="1">
    <location>
        <begin position="1"/>
        <end position="64"/>
    </location>
</feature>
<feature type="chain" id="PRO_0000007124" description="Omega-6 fatty acid desaturase, chloroplastic">
    <location>
        <begin position="65"/>
        <end position="443"/>
    </location>
</feature>
<feature type="short sequence motif" description="Histidine box-1" evidence="4">
    <location>
        <begin position="166"/>
        <end position="170"/>
    </location>
</feature>
<feature type="short sequence motif" description="Histidine box-2" evidence="4">
    <location>
        <begin position="202"/>
        <end position="206"/>
    </location>
</feature>
<feature type="short sequence motif" description="Histidine box-3" evidence="4">
    <location>
        <begin position="362"/>
        <end position="366"/>
    </location>
</feature>
<accession>P48627</accession>
<keyword id="KW-0150">Chloroplast</keyword>
<keyword id="KW-0275">Fatty acid biosynthesis</keyword>
<keyword id="KW-0276">Fatty acid metabolism</keyword>
<keyword id="KW-0444">Lipid biosynthesis</keyword>
<keyword id="KW-0443">Lipid metabolism</keyword>
<keyword id="KW-0472">Membrane</keyword>
<keyword id="KW-0560">Oxidoreductase</keyword>
<keyword id="KW-0934">Plastid</keyword>
<keyword id="KW-0809">Transit peptide</keyword>
<dbReference type="EC" id="1.14.19.23" evidence="2"/>
<dbReference type="EMBL" id="L29214">
    <property type="protein sequence ID" value="AAA50157.1"/>
    <property type="molecule type" value="mRNA"/>
</dbReference>
<dbReference type="PIR" id="T08136">
    <property type="entry name" value="T08136"/>
</dbReference>
<dbReference type="SMR" id="P48627"/>
<dbReference type="EnsemblPlants" id="CDX68706">
    <property type="protein sequence ID" value="CDX68706"/>
    <property type="gene ID" value="GSBRNA2T00130387001"/>
</dbReference>
<dbReference type="Gramene" id="CDX68706">
    <property type="protein sequence ID" value="CDX68706"/>
    <property type="gene ID" value="GSBRNA2T00130387001"/>
</dbReference>
<dbReference type="OMA" id="CGHRSFA"/>
<dbReference type="UniPathway" id="UPA00658"/>
<dbReference type="GO" id="GO:0031969">
    <property type="term" value="C:chloroplast membrane"/>
    <property type="evidence" value="ECO:0007669"/>
    <property type="project" value="UniProtKB-SubCell"/>
</dbReference>
<dbReference type="GO" id="GO:0102850">
    <property type="term" value="F:acyl-lipid (n+3)-(Z)-desaturase (ferredoxin) activity"/>
    <property type="evidence" value="ECO:0007669"/>
    <property type="project" value="UniProtKB-EC"/>
</dbReference>
<dbReference type="GO" id="GO:0006636">
    <property type="term" value="P:unsaturated fatty acid biosynthetic process"/>
    <property type="evidence" value="ECO:0007669"/>
    <property type="project" value="UniProtKB-UniPathway"/>
</dbReference>
<dbReference type="CDD" id="cd03507">
    <property type="entry name" value="Delta12-FADS-like"/>
    <property type="match status" value="1"/>
</dbReference>
<dbReference type="InterPro" id="IPR005804">
    <property type="entry name" value="FA_desaturase_dom"/>
</dbReference>
<dbReference type="InterPro" id="IPR012171">
    <property type="entry name" value="Fatty_acid_desaturase"/>
</dbReference>
<dbReference type="PANTHER" id="PTHR32100">
    <property type="entry name" value="OMEGA-6 FATTY ACID DESATURASE, CHLOROPLASTIC"/>
    <property type="match status" value="1"/>
</dbReference>
<dbReference type="Pfam" id="PF00487">
    <property type="entry name" value="FA_desaturase"/>
    <property type="match status" value="1"/>
</dbReference>
<reference key="1">
    <citation type="journal article" date="1994" name="Plant Physiol.">
        <title>Cloning of a higher-plant plastid omega-6 fatty acid desaturase cDNA and its expression in a cyanobacterium.</title>
        <authorList>
            <person name="Hitz W.D."/>
            <person name="Carlson T.J."/>
            <person name="Booth J.R. Jr."/>
            <person name="Kinney A.J."/>
            <person name="Stecca K.L."/>
            <person name="Yadav N.S."/>
        </authorList>
    </citation>
    <scope>NUCLEOTIDE SEQUENCE [MRNA]</scope>
    <scope>FUNCTION</scope>
    <scope>CATALYTIC ACTIVITY</scope>
    <source>
        <tissue>Seed</tissue>
    </source>
</reference>
<comment type="function">
    <text evidence="2">Chloroplast omega-6 fatty acid desaturase introduces the second double bond in the biosynthesis of 16:3 and 18:3 fatty acids, important constituents of plant membranes. It is thought to use ferredoxin as an electron donor and to act on fatty acids esterified to galactolipids, sulfolipids and phosphatidylglycerol.</text>
</comment>
<comment type="catalytic activity">
    <reaction evidence="2">
        <text>a (9Z)-octadecenoyl-containing glycerolipid + 2 reduced [2Fe-2S]-[ferredoxin] + O2 + 2 H(+) = a (9Z,12Z)-octadecadienoyl-containing glycerolipid + 2 oxidized [2Fe-2S]-[ferredoxin] + 2 H2O</text>
        <dbReference type="Rhea" id="RHEA:46376"/>
        <dbReference type="Rhea" id="RHEA-COMP:10000"/>
        <dbReference type="Rhea" id="RHEA-COMP:10001"/>
        <dbReference type="ChEBI" id="CHEBI:15377"/>
        <dbReference type="ChEBI" id="CHEBI:15378"/>
        <dbReference type="ChEBI" id="CHEBI:15379"/>
        <dbReference type="ChEBI" id="CHEBI:33737"/>
        <dbReference type="ChEBI" id="CHEBI:33738"/>
        <dbReference type="ChEBI" id="CHEBI:88240"/>
        <dbReference type="ChEBI" id="CHEBI:88351"/>
        <dbReference type="EC" id="1.14.19.23"/>
    </reaction>
</comment>
<comment type="pathway">
    <text>Lipid metabolism; polyunsaturated fatty acid biosynthesis.</text>
</comment>
<comment type="subcellular location">
    <subcellularLocation>
        <location evidence="4">Plastid</location>
        <location evidence="4">Chloroplast membrane</location>
        <topology evidence="4">Peripheral membrane protein</topology>
    </subcellularLocation>
</comment>
<comment type="domain">
    <text>The histidine box domains may contain the active site and/or be involved in metal ion binding.</text>
</comment>
<comment type="similarity">
    <text evidence="4">Belongs to the fatty acid desaturase type 1 family.</text>
</comment>
<proteinExistence type="evidence at protein level"/>
<organism>
    <name type="scientific">Brassica napus</name>
    <name type="common">Rape</name>
    <dbReference type="NCBI Taxonomy" id="3708"/>
    <lineage>
        <taxon>Eukaryota</taxon>
        <taxon>Viridiplantae</taxon>
        <taxon>Streptophyta</taxon>
        <taxon>Embryophyta</taxon>
        <taxon>Tracheophyta</taxon>
        <taxon>Spermatophyta</taxon>
        <taxon>Magnoliopsida</taxon>
        <taxon>eudicotyledons</taxon>
        <taxon>Gunneridae</taxon>
        <taxon>Pentapetalae</taxon>
        <taxon>rosids</taxon>
        <taxon>malvids</taxon>
        <taxon>Brassicales</taxon>
        <taxon>Brassicaceae</taxon>
        <taxon>Brassiceae</taxon>
        <taxon>Brassica</taxon>
    </lineage>
</organism>
<protein>
    <recommendedName>
        <fullName evidence="3">Omega-6 fatty acid desaturase, chloroplastic</fullName>
        <ecNumber evidence="2">1.14.19.23</ecNumber>
    </recommendedName>
</protein>